<sequence>MASVSMRDMLTAGVHFGHQTRYWNPKMKQFIFGARNRVHIINLEKTVPMFNEALAELAKVGEKKGKVLFVGTKRAASESVKEAALASNQYYVNNRWLGGMLTNWKTVRQSIKRLKELEVQSTDGTFDKLTKKEALMRTREMEKLEKSLGGIKDMGGLPDALFVIDADHEHIAIKEANNLGIPVFAVVDTNSSPDGVDYIIPGNDDAIRAVQLYLNAAAQAINEGRNKDVAAVAEKDGFVEAE</sequence>
<proteinExistence type="inferred from homology"/>
<evidence type="ECO:0000255" key="1">
    <source>
        <dbReference type="HAMAP-Rule" id="MF_00291"/>
    </source>
</evidence>
<evidence type="ECO:0000305" key="2"/>
<dbReference type="EMBL" id="CP000627">
    <property type="protein sequence ID" value="ABQ19840.1"/>
    <property type="molecule type" value="Genomic_DNA"/>
</dbReference>
<dbReference type="EMBL" id="CP001235">
    <property type="protein sequence ID" value="ACP10366.1"/>
    <property type="molecule type" value="Genomic_DNA"/>
</dbReference>
<dbReference type="RefSeq" id="WP_000179228.1">
    <property type="nucleotide sequence ID" value="NZ_JAACZH010000008.1"/>
</dbReference>
<dbReference type="SMR" id="A5F607"/>
<dbReference type="GeneID" id="89513745"/>
<dbReference type="KEGG" id="vco:VC0395_A1851"/>
<dbReference type="KEGG" id="vcr:VC395_2376"/>
<dbReference type="PATRIC" id="fig|345073.21.peg.2291"/>
<dbReference type="eggNOG" id="COG0052">
    <property type="taxonomic scope" value="Bacteria"/>
</dbReference>
<dbReference type="HOGENOM" id="CLU_040318_1_2_6"/>
<dbReference type="OrthoDB" id="9808036at2"/>
<dbReference type="Proteomes" id="UP000000249">
    <property type="component" value="Chromosome 2"/>
</dbReference>
<dbReference type="GO" id="GO:0022627">
    <property type="term" value="C:cytosolic small ribosomal subunit"/>
    <property type="evidence" value="ECO:0007669"/>
    <property type="project" value="TreeGrafter"/>
</dbReference>
<dbReference type="GO" id="GO:0003735">
    <property type="term" value="F:structural constituent of ribosome"/>
    <property type="evidence" value="ECO:0007669"/>
    <property type="project" value="InterPro"/>
</dbReference>
<dbReference type="GO" id="GO:0006412">
    <property type="term" value="P:translation"/>
    <property type="evidence" value="ECO:0007669"/>
    <property type="project" value="UniProtKB-UniRule"/>
</dbReference>
<dbReference type="CDD" id="cd01425">
    <property type="entry name" value="RPS2"/>
    <property type="match status" value="1"/>
</dbReference>
<dbReference type="FunFam" id="1.10.287.610:FF:000001">
    <property type="entry name" value="30S ribosomal protein S2"/>
    <property type="match status" value="1"/>
</dbReference>
<dbReference type="Gene3D" id="3.40.50.10490">
    <property type="entry name" value="Glucose-6-phosphate isomerase like protein, domain 1"/>
    <property type="match status" value="1"/>
</dbReference>
<dbReference type="Gene3D" id="1.10.287.610">
    <property type="entry name" value="Helix hairpin bin"/>
    <property type="match status" value="1"/>
</dbReference>
<dbReference type="HAMAP" id="MF_00291_B">
    <property type="entry name" value="Ribosomal_uS2_B"/>
    <property type="match status" value="1"/>
</dbReference>
<dbReference type="InterPro" id="IPR001865">
    <property type="entry name" value="Ribosomal_uS2"/>
</dbReference>
<dbReference type="InterPro" id="IPR005706">
    <property type="entry name" value="Ribosomal_uS2_bac/mit/plastid"/>
</dbReference>
<dbReference type="InterPro" id="IPR018130">
    <property type="entry name" value="Ribosomal_uS2_CS"/>
</dbReference>
<dbReference type="InterPro" id="IPR023591">
    <property type="entry name" value="Ribosomal_uS2_flav_dom_sf"/>
</dbReference>
<dbReference type="NCBIfam" id="TIGR01011">
    <property type="entry name" value="rpsB_bact"/>
    <property type="match status" value="1"/>
</dbReference>
<dbReference type="PANTHER" id="PTHR12534">
    <property type="entry name" value="30S RIBOSOMAL PROTEIN S2 PROKARYOTIC AND ORGANELLAR"/>
    <property type="match status" value="1"/>
</dbReference>
<dbReference type="PANTHER" id="PTHR12534:SF0">
    <property type="entry name" value="SMALL RIBOSOMAL SUBUNIT PROTEIN US2M"/>
    <property type="match status" value="1"/>
</dbReference>
<dbReference type="Pfam" id="PF00318">
    <property type="entry name" value="Ribosomal_S2"/>
    <property type="match status" value="1"/>
</dbReference>
<dbReference type="PRINTS" id="PR00395">
    <property type="entry name" value="RIBOSOMALS2"/>
</dbReference>
<dbReference type="SUPFAM" id="SSF52313">
    <property type="entry name" value="Ribosomal protein S2"/>
    <property type="match status" value="1"/>
</dbReference>
<dbReference type="PROSITE" id="PS00962">
    <property type="entry name" value="RIBOSOMAL_S2_1"/>
    <property type="match status" value="1"/>
</dbReference>
<dbReference type="PROSITE" id="PS00963">
    <property type="entry name" value="RIBOSOMAL_S2_2"/>
    <property type="match status" value="1"/>
</dbReference>
<reference key="1">
    <citation type="submission" date="2007-03" db="EMBL/GenBank/DDBJ databases">
        <authorList>
            <person name="Heidelberg J."/>
        </authorList>
    </citation>
    <scope>NUCLEOTIDE SEQUENCE [LARGE SCALE GENOMIC DNA]</scope>
    <source>
        <strain>ATCC 39541 / Classical Ogawa 395 / O395</strain>
    </source>
</reference>
<reference key="2">
    <citation type="journal article" date="2008" name="PLoS ONE">
        <title>A recalibrated molecular clock and independent origins for the cholera pandemic clones.</title>
        <authorList>
            <person name="Feng L."/>
            <person name="Reeves P.R."/>
            <person name="Lan R."/>
            <person name="Ren Y."/>
            <person name="Gao C."/>
            <person name="Zhou Z."/>
            <person name="Ren Y."/>
            <person name="Cheng J."/>
            <person name="Wang W."/>
            <person name="Wang J."/>
            <person name="Qian W."/>
            <person name="Li D."/>
            <person name="Wang L."/>
        </authorList>
    </citation>
    <scope>NUCLEOTIDE SEQUENCE [LARGE SCALE GENOMIC DNA]</scope>
    <source>
        <strain>ATCC 39541 / Classical Ogawa 395 / O395</strain>
    </source>
</reference>
<organism>
    <name type="scientific">Vibrio cholerae serotype O1 (strain ATCC 39541 / Classical Ogawa 395 / O395)</name>
    <dbReference type="NCBI Taxonomy" id="345073"/>
    <lineage>
        <taxon>Bacteria</taxon>
        <taxon>Pseudomonadati</taxon>
        <taxon>Pseudomonadota</taxon>
        <taxon>Gammaproteobacteria</taxon>
        <taxon>Vibrionales</taxon>
        <taxon>Vibrionaceae</taxon>
        <taxon>Vibrio</taxon>
    </lineage>
</organism>
<feature type="chain" id="PRO_1000071952" description="Small ribosomal subunit protein uS2">
    <location>
        <begin position="1"/>
        <end position="242"/>
    </location>
</feature>
<protein>
    <recommendedName>
        <fullName evidence="1">Small ribosomal subunit protein uS2</fullName>
    </recommendedName>
    <alternativeName>
        <fullName evidence="2">30S ribosomal protein S2</fullName>
    </alternativeName>
</protein>
<name>RS2_VIBC3</name>
<accession>A5F607</accession>
<accession>C3M3L7</accession>
<comment type="similarity">
    <text evidence="1">Belongs to the universal ribosomal protein uS2 family.</text>
</comment>
<keyword id="KW-0687">Ribonucleoprotein</keyword>
<keyword id="KW-0689">Ribosomal protein</keyword>
<gene>
    <name evidence="1" type="primary">rpsB</name>
    <name type="ordered locus">VC0395_A1851</name>
    <name type="ordered locus">VC395_2376</name>
</gene>